<reference evidence="3 4" key="1">
    <citation type="journal article" date="2006" name="Comp. Biochem. Physiol.">
        <title>A novel slow-tight binding serine protease inhibitor from eastern oyster (Crassostrea virginica) plasma inhibits perkinsin, the major extracellular protease of the oyster protozoan parasite Perkinsus marinus.</title>
        <authorList>
            <person name="Xue Q.-G."/>
            <person name="Waldrop G.L."/>
            <person name="Schey K.L."/>
            <person name="Itoh N."/>
            <person name="Ogawa M."/>
            <person name="Cooper R.K."/>
            <person name="Losso J.N."/>
            <person name="La Peyre J.F."/>
        </authorList>
    </citation>
    <scope>NUCLEOTIDE SEQUENCE [MRNA]</scope>
    <scope>PROTEIN SEQUENCE OF 20-90</scope>
    <scope>FUNCTION</scope>
    <scope>SUBCELLULAR LOCATION</scope>
    <scope>TISSUE SPECIFICITY</scope>
    <scope>MASS SPECTROMETRY</scope>
    <scope>DISULFIDE BONDS</scope>
    <source>
        <tissue evidence="1">Digestive gland</tissue>
        <tissue evidence="1">Hemolymph</tissue>
    </source>
</reference>
<reference key="2">
    <citation type="journal article" date="2010" name="Dev. Comp. Immunol.">
        <title>Serine protease inhibitor cvSI-1 potential role in the eastern oyster host defense against the protozoan parasite Perkinsus marinus.</title>
        <authorList>
            <person name="La Peyre J.F."/>
            <person name="Xue Q.G."/>
            <person name="Itoh N."/>
            <person name="Li Y."/>
            <person name="Cooper R.K."/>
        </authorList>
    </citation>
    <scope>FUNCTION</scope>
    <scope>TISSUE SPECIFICITY</scope>
</reference>
<dbReference type="EMBL" id="DQ092546">
    <property type="protein sequence ID" value="AAZ41364.1"/>
    <property type="molecule type" value="mRNA"/>
</dbReference>
<dbReference type="MEROPS" id="I84.002"/>
<dbReference type="OrthoDB" id="10325686at2759"/>
<dbReference type="GO" id="GO:0005615">
    <property type="term" value="C:extracellular space"/>
    <property type="evidence" value="ECO:0000314"/>
    <property type="project" value="UniProtKB"/>
</dbReference>
<dbReference type="GO" id="GO:0004867">
    <property type="term" value="F:serine-type endopeptidase inhibitor activity"/>
    <property type="evidence" value="ECO:0000314"/>
    <property type="project" value="UniProtKB"/>
</dbReference>
<feature type="signal peptide" evidence="1">
    <location>
        <begin position="1"/>
        <end position="19"/>
    </location>
</feature>
<feature type="chain" id="PRO_0000046060" description="Serine protease inhibitor Cvsi-1" evidence="1">
    <location>
        <begin position="20"/>
        <end position="90"/>
    </location>
</feature>
<evidence type="ECO:0000269" key="1">
    <source>
    </source>
</evidence>
<evidence type="ECO:0000269" key="2">
    <source>
    </source>
</evidence>
<evidence type="ECO:0000305" key="3"/>
<evidence type="ECO:0000312" key="4">
    <source>
        <dbReference type="EMBL" id="AAZ41364.1"/>
    </source>
</evidence>
<protein>
    <recommendedName>
        <fullName>Serine protease inhibitor Cvsi-1</fullName>
    </recommendedName>
</protein>
<organism>
    <name type="scientific">Crassostrea virginica</name>
    <name type="common">Eastern oyster</name>
    <dbReference type="NCBI Taxonomy" id="6565"/>
    <lineage>
        <taxon>Eukaryota</taxon>
        <taxon>Metazoa</taxon>
        <taxon>Spiralia</taxon>
        <taxon>Lophotrochozoa</taxon>
        <taxon>Mollusca</taxon>
        <taxon>Bivalvia</taxon>
        <taxon>Autobranchia</taxon>
        <taxon>Pteriomorphia</taxon>
        <taxon>Ostreida</taxon>
        <taxon>Ostreoidea</taxon>
        <taxon>Ostreidae</taxon>
        <taxon>Crassostrea</taxon>
    </lineage>
</organism>
<sequence>MDVVRTLILCVCLFGLTFAVPCIDGVCTSNELQCASGYVKGCHAGLCTCEHATTQSCTVVNNCLHLGTCSLHGRDGFWHCVDSVCKCFFF</sequence>
<comment type="function">
    <text evidence="1 2">Slow-binding inhibitor of serine proteases. The inhibitor rapidly binds to the protease forming a weak enzyme-inhibitor complex, and this is followed by a slow isomerization forming a tight-binding enzyme-inhibitor complex. Active against subtilisin A, perkinsin and trypsin with dissociation constants of 0.29 nM, 13.7 nM and 17.7 nM respectively. Not active against thermolysin, papain or pepsin. Has antiparasitic activity against the protozoan P.marinus.</text>
</comment>
<comment type="subcellular location">
    <subcellularLocation>
        <location evidence="1">Secreted</location>
    </subcellularLocation>
</comment>
<comment type="tissue specificity">
    <text evidence="1 2">Detected in hemolymph (at protein level). In oysters collected in the summer the expression level is highest in the digestive gland with low levels of expression in gill, mantle, labial palp, style-sac midgut, gonad, heart, and hemocyte. In winter expression levels are higher in all tissues with highest expression levels observed in the digestive gland. Within the digestive gland expression is limited to the basophil cells of the digestive diverticula.</text>
</comment>
<comment type="PTM">
    <text evidence="3">Contains 6 disulfide bonds.</text>
</comment>
<comment type="mass spectrometry"/>
<proteinExistence type="evidence at protein level"/>
<name>SPI1_CRAVI</name>
<keyword id="KW-0929">Antimicrobial</keyword>
<keyword id="KW-0903">Direct protein sequencing</keyword>
<keyword id="KW-1015">Disulfide bond</keyword>
<keyword id="KW-0646">Protease inhibitor</keyword>
<keyword id="KW-0964">Secreted</keyword>
<keyword id="KW-0722">Serine protease inhibitor</keyword>
<keyword id="KW-0732">Signal</keyword>
<accession>Q30HU9</accession>
<accession>P84574</accession>